<dbReference type="EMBL" id="AE016879">
    <property type="protein sequence ID" value="AAP28354.1"/>
    <property type="molecule type" value="Genomic_DNA"/>
</dbReference>
<dbReference type="EMBL" id="AE017334">
    <property type="protein sequence ID" value="AAT33773.2"/>
    <property type="molecule type" value="Genomic_DNA"/>
</dbReference>
<dbReference type="EMBL" id="AE017225">
    <property type="protein sequence ID" value="AAT56614.1"/>
    <property type="molecule type" value="Genomic_DNA"/>
</dbReference>
<dbReference type="RefSeq" id="NP_846868.1">
    <property type="nucleotide sequence ID" value="NC_003997.3"/>
</dbReference>
<dbReference type="RefSeq" id="WP_000464508.1">
    <property type="nucleotide sequence ID" value="NZ_WXXJ01000027.1"/>
</dbReference>
<dbReference type="RefSeq" id="YP_030563.1">
    <property type="nucleotide sequence ID" value="NC_005945.1"/>
</dbReference>
<dbReference type="SMR" id="Q81LG8"/>
<dbReference type="STRING" id="261594.GBAA_4651"/>
<dbReference type="DNASU" id="1084960"/>
<dbReference type="GeneID" id="93006680"/>
<dbReference type="KEGG" id="ban:BA_4651"/>
<dbReference type="KEGG" id="bar:GBAA_4651"/>
<dbReference type="KEGG" id="bat:BAS4316"/>
<dbReference type="PATRIC" id="fig|198094.11.peg.4616"/>
<dbReference type="eggNOG" id="COG0632">
    <property type="taxonomic scope" value="Bacteria"/>
</dbReference>
<dbReference type="HOGENOM" id="CLU_087936_1_0_9"/>
<dbReference type="OMA" id="ECAGVGY"/>
<dbReference type="OrthoDB" id="5293449at2"/>
<dbReference type="Proteomes" id="UP000000427">
    <property type="component" value="Chromosome"/>
</dbReference>
<dbReference type="Proteomes" id="UP000000594">
    <property type="component" value="Chromosome"/>
</dbReference>
<dbReference type="GO" id="GO:0005737">
    <property type="term" value="C:cytoplasm"/>
    <property type="evidence" value="ECO:0007669"/>
    <property type="project" value="UniProtKB-SubCell"/>
</dbReference>
<dbReference type="GO" id="GO:0009379">
    <property type="term" value="C:Holliday junction helicase complex"/>
    <property type="evidence" value="ECO:0007669"/>
    <property type="project" value="InterPro"/>
</dbReference>
<dbReference type="GO" id="GO:0048476">
    <property type="term" value="C:Holliday junction resolvase complex"/>
    <property type="evidence" value="ECO:0007669"/>
    <property type="project" value="UniProtKB-UniRule"/>
</dbReference>
<dbReference type="GO" id="GO:0005524">
    <property type="term" value="F:ATP binding"/>
    <property type="evidence" value="ECO:0007669"/>
    <property type="project" value="InterPro"/>
</dbReference>
<dbReference type="GO" id="GO:0000400">
    <property type="term" value="F:four-way junction DNA binding"/>
    <property type="evidence" value="ECO:0007669"/>
    <property type="project" value="UniProtKB-UniRule"/>
</dbReference>
<dbReference type="GO" id="GO:0009378">
    <property type="term" value="F:four-way junction helicase activity"/>
    <property type="evidence" value="ECO:0007669"/>
    <property type="project" value="InterPro"/>
</dbReference>
<dbReference type="GO" id="GO:0006310">
    <property type="term" value="P:DNA recombination"/>
    <property type="evidence" value="ECO:0007669"/>
    <property type="project" value="UniProtKB-UniRule"/>
</dbReference>
<dbReference type="GO" id="GO:0006281">
    <property type="term" value="P:DNA repair"/>
    <property type="evidence" value="ECO:0007669"/>
    <property type="project" value="UniProtKB-UniRule"/>
</dbReference>
<dbReference type="CDD" id="cd14332">
    <property type="entry name" value="UBA_RuvA_C"/>
    <property type="match status" value="1"/>
</dbReference>
<dbReference type="Gene3D" id="1.10.150.20">
    <property type="entry name" value="5' to 3' exonuclease, C-terminal subdomain"/>
    <property type="match status" value="1"/>
</dbReference>
<dbReference type="Gene3D" id="1.10.8.10">
    <property type="entry name" value="DNA helicase RuvA subunit, C-terminal domain"/>
    <property type="match status" value="1"/>
</dbReference>
<dbReference type="Gene3D" id="2.40.50.140">
    <property type="entry name" value="Nucleic acid-binding proteins"/>
    <property type="match status" value="1"/>
</dbReference>
<dbReference type="HAMAP" id="MF_00031">
    <property type="entry name" value="DNA_HJ_migration_RuvA"/>
    <property type="match status" value="1"/>
</dbReference>
<dbReference type="InterPro" id="IPR013849">
    <property type="entry name" value="DNA_helicase_Holl-junc_RuvA_I"/>
</dbReference>
<dbReference type="InterPro" id="IPR003583">
    <property type="entry name" value="Hlx-hairpin-Hlx_DNA-bd_motif"/>
</dbReference>
<dbReference type="InterPro" id="IPR012340">
    <property type="entry name" value="NA-bd_OB-fold"/>
</dbReference>
<dbReference type="InterPro" id="IPR000085">
    <property type="entry name" value="RuvA"/>
</dbReference>
<dbReference type="InterPro" id="IPR010994">
    <property type="entry name" value="RuvA_2-like"/>
</dbReference>
<dbReference type="InterPro" id="IPR011114">
    <property type="entry name" value="RuvA_C"/>
</dbReference>
<dbReference type="InterPro" id="IPR036267">
    <property type="entry name" value="RuvA_C_sf"/>
</dbReference>
<dbReference type="NCBIfam" id="TIGR00084">
    <property type="entry name" value="ruvA"/>
    <property type="match status" value="1"/>
</dbReference>
<dbReference type="Pfam" id="PF14520">
    <property type="entry name" value="HHH_5"/>
    <property type="match status" value="1"/>
</dbReference>
<dbReference type="Pfam" id="PF07499">
    <property type="entry name" value="RuvA_C"/>
    <property type="match status" value="1"/>
</dbReference>
<dbReference type="Pfam" id="PF01330">
    <property type="entry name" value="RuvA_N"/>
    <property type="match status" value="1"/>
</dbReference>
<dbReference type="SMART" id="SM00278">
    <property type="entry name" value="HhH1"/>
    <property type="match status" value="2"/>
</dbReference>
<dbReference type="SUPFAM" id="SSF46929">
    <property type="entry name" value="DNA helicase RuvA subunit, C-terminal domain"/>
    <property type="match status" value="1"/>
</dbReference>
<dbReference type="SUPFAM" id="SSF50249">
    <property type="entry name" value="Nucleic acid-binding proteins"/>
    <property type="match status" value="1"/>
</dbReference>
<dbReference type="SUPFAM" id="SSF47781">
    <property type="entry name" value="RuvA domain 2-like"/>
    <property type="match status" value="1"/>
</dbReference>
<evidence type="ECO:0000255" key="1">
    <source>
        <dbReference type="HAMAP-Rule" id="MF_00031"/>
    </source>
</evidence>
<organism>
    <name type="scientific">Bacillus anthracis</name>
    <dbReference type="NCBI Taxonomy" id="1392"/>
    <lineage>
        <taxon>Bacteria</taxon>
        <taxon>Bacillati</taxon>
        <taxon>Bacillota</taxon>
        <taxon>Bacilli</taxon>
        <taxon>Bacillales</taxon>
        <taxon>Bacillaceae</taxon>
        <taxon>Bacillus</taxon>
        <taxon>Bacillus cereus group</taxon>
    </lineage>
</organism>
<sequence>MFEYVTGYVEYVGPEYVVIDHNGIGYQIFTPNPYVFQRSKQEIRVYTYHYVREDIMALYGFKTREERLLFTKLLGVSGIGPKGALAILASGQTGQVVQAIEHEDEKFLVKFPGVGKKTARQMILDLKGKLADVVPDAFVDLFSDEERFDEKKGSSAELDEALEALRALGYAEREVSRVVPELLKESLTTDQYIKKALSLLLNGKR</sequence>
<accession>Q81LG8</accession>
<accession>Q6HSX5</accession>
<accession>Q6KM63</accession>
<comment type="function">
    <text evidence="1">The RuvA-RuvB-RuvC complex processes Holliday junction (HJ) DNA during genetic recombination and DNA repair, while the RuvA-RuvB complex plays an important role in the rescue of blocked DNA replication forks via replication fork reversal (RFR). RuvA specifically binds to HJ cruciform DNA, conferring on it an open structure. The RuvB hexamer acts as an ATP-dependent pump, pulling dsDNA into and through the RuvAB complex. HJ branch migration allows RuvC to scan DNA until it finds its consensus sequence, where it cleaves and resolves the cruciform DNA.</text>
</comment>
<comment type="subunit">
    <text evidence="1">Homotetramer. Forms an RuvA(8)-RuvB(12)-Holliday junction (HJ) complex. HJ DNA is sandwiched between 2 RuvA tetramers; dsDNA enters through RuvA and exits via RuvB. An RuvB hexamer assembles on each DNA strand where it exits the tetramer. Each RuvB hexamer is contacted by two RuvA subunits (via domain III) on 2 adjacent RuvB subunits; this complex drives branch migration. In the full resolvosome a probable DNA-RuvA(4)-RuvB(12)-RuvC(2) complex forms which resolves the HJ.</text>
</comment>
<comment type="subcellular location">
    <subcellularLocation>
        <location evidence="1">Cytoplasm</location>
    </subcellularLocation>
</comment>
<comment type="domain">
    <text evidence="1">Has three domains with a flexible linker between the domains II and III and assumes an 'L' shape. Domain III is highly mobile and contacts RuvB.</text>
</comment>
<comment type="similarity">
    <text evidence="1">Belongs to the RuvA family.</text>
</comment>
<keyword id="KW-0963">Cytoplasm</keyword>
<keyword id="KW-0227">DNA damage</keyword>
<keyword id="KW-0233">DNA recombination</keyword>
<keyword id="KW-0234">DNA repair</keyword>
<keyword id="KW-0238">DNA-binding</keyword>
<keyword id="KW-1185">Reference proteome</keyword>
<name>RUVA_BACAN</name>
<reference key="1">
    <citation type="journal article" date="2003" name="Nature">
        <title>The genome sequence of Bacillus anthracis Ames and comparison to closely related bacteria.</title>
        <authorList>
            <person name="Read T.D."/>
            <person name="Peterson S.N."/>
            <person name="Tourasse N.J."/>
            <person name="Baillie L.W."/>
            <person name="Paulsen I.T."/>
            <person name="Nelson K.E."/>
            <person name="Tettelin H."/>
            <person name="Fouts D.E."/>
            <person name="Eisen J.A."/>
            <person name="Gill S.R."/>
            <person name="Holtzapple E.K."/>
            <person name="Okstad O.A."/>
            <person name="Helgason E."/>
            <person name="Rilstone J."/>
            <person name="Wu M."/>
            <person name="Kolonay J.F."/>
            <person name="Beanan M.J."/>
            <person name="Dodson R.J."/>
            <person name="Brinkac L.M."/>
            <person name="Gwinn M.L."/>
            <person name="DeBoy R.T."/>
            <person name="Madpu R."/>
            <person name="Daugherty S.C."/>
            <person name="Durkin A.S."/>
            <person name="Haft D.H."/>
            <person name="Nelson W.C."/>
            <person name="Peterson J.D."/>
            <person name="Pop M."/>
            <person name="Khouri H.M."/>
            <person name="Radune D."/>
            <person name="Benton J.L."/>
            <person name="Mahamoud Y."/>
            <person name="Jiang L."/>
            <person name="Hance I.R."/>
            <person name="Weidman J.F."/>
            <person name="Berry K.J."/>
            <person name="Plaut R.D."/>
            <person name="Wolf A.M."/>
            <person name="Watkins K.L."/>
            <person name="Nierman W.C."/>
            <person name="Hazen A."/>
            <person name="Cline R.T."/>
            <person name="Redmond C."/>
            <person name="Thwaite J.E."/>
            <person name="White O."/>
            <person name="Salzberg S.L."/>
            <person name="Thomason B."/>
            <person name="Friedlander A.M."/>
            <person name="Koehler T.M."/>
            <person name="Hanna P.C."/>
            <person name="Kolstoe A.-B."/>
            <person name="Fraser C.M."/>
        </authorList>
    </citation>
    <scope>NUCLEOTIDE SEQUENCE [LARGE SCALE GENOMIC DNA]</scope>
    <source>
        <strain>Ames / isolate Porton</strain>
    </source>
</reference>
<reference key="2">
    <citation type="journal article" date="2009" name="J. Bacteriol.">
        <title>The complete genome sequence of Bacillus anthracis Ames 'Ancestor'.</title>
        <authorList>
            <person name="Ravel J."/>
            <person name="Jiang L."/>
            <person name="Stanley S.T."/>
            <person name="Wilson M.R."/>
            <person name="Decker R.S."/>
            <person name="Read T.D."/>
            <person name="Worsham P."/>
            <person name="Keim P.S."/>
            <person name="Salzberg S.L."/>
            <person name="Fraser-Liggett C.M."/>
            <person name="Rasko D.A."/>
        </authorList>
    </citation>
    <scope>NUCLEOTIDE SEQUENCE [LARGE SCALE GENOMIC DNA]</scope>
    <source>
        <strain>Ames ancestor</strain>
    </source>
</reference>
<reference key="3">
    <citation type="submission" date="2004-01" db="EMBL/GenBank/DDBJ databases">
        <title>Complete genome sequence of Bacillus anthracis Sterne.</title>
        <authorList>
            <person name="Brettin T.S."/>
            <person name="Bruce D."/>
            <person name="Challacombe J.F."/>
            <person name="Gilna P."/>
            <person name="Han C."/>
            <person name="Hill K."/>
            <person name="Hitchcock P."/>
            <person name="Jackson P."/>
            <person name="Keim P."/>
            <person name="Longmire J."/>
            <person name="Lucas S."/>
            <person name="Okinaka R."/>
            <person name="Richardson P."/>
            <person name="Rubin E."/>
            <person name="Tice H."/>
        </authorList>
    </citation>
    <scope>NUCLEOTIDE SEQUENCE [LARGE SCALE GENOMIC DNA]</scope>
    <source>
        <strain>Sterne</strain>
    </source>
</reference>
<gene>
    <name evidence="1" type="primary">ruvA</name>
    <name type="ordered locus">BA_4651</name>
    <name type="ordered locus">GBAA_4651</name>
    <name type="ordered locus">BAS4316</name>
</gene>
<feature type="chain" id="PRO_0000094599" description="Holliday junction branch migration complex subunit RuvA">
    <location>
        <begin position="1"/>
        <end position="205"/>
    </location>
</feature>
<feature type="region of interest" description="Domain I" evidence="1">
    <location>
        <begin position="1"/>
        <end position="62"/>
    </location>
</feature>
<feature type="region of interest" description="Domain II" evidence="1">
    <location>
        <begin position="63"/>
        <end position="141"/>
    </location>
</feature>
<feature type="region of interest" description="Flexible linker" evidence="1">
    <location>
        <begin position="142"/>
        <end position="152"/>
    </location>
</feature>
<feature type="region of interest" description="Domain III" evidence="1">
    <location>
        <begin position="153"/>
        <end position="205"/>
    </location>
</feature>
<protein>
    <recommendedName>
        <fullName evidence="1">Holliday junction branch migration complex subunit RuvA</fullName>
    </recommendedName>
</protein>
<proteinExistence type="inferred from homology"/>